<evidence type="ECO:0000255" key="1"/>
<evidence type="ECO:0000256" key="2">
    <source>
        <dbReference type="SAM" id="MobiDB-lite"/>
    </source>
</evidence>
<evidence type="ECO:0000269" key="3">
    <source>
    </source>
</evidence>
<evidence type="ECO:0000269" key="4">
    <source>
    </source>
</evidence>
<evidence type="ECO:0000303" key="5">
    <source>
    </source>
</evidence>
<evidence type="ECO:0000303" key="6">
    <source>
    </source>
</evidence>
<evidence type="ECO:0000305" key="7"/>
<evidence type="ECO:0000305" key="8">
    <source>
    </source>
</evidence>
<evidence type="ECO:0000305" key="9">
    <source>
    </source>
</evidence>
<evidence type="ECO:0000305" key="10">
    <source>
    </source>
</evidence>
<comment type="function">
    <text evidence="3 4 10">CAHS proteins are cytosolic heat soluble proteins that seem to contribute to the anhydrobiosis in tardigrades, but their specific mechanisms are yet to be identified (PubMed:28306513, PubMed:33545053). It is possible that protection during anhydrobiosis might occur via the stabilization of vitrifying small molecules such as sugars, but not via the direct glass transition of CAHS proteins themselves (Probable).</text>
</comment>
<comment type="subcellular location">
    <subcellularLocation>
        <location evidence="9">Cytoplasm</location>
    </subcellularLocation>
</comment>
<comment type="induction">
    <text evidence="3">Expression is highly induced during desiccation (PubMed:28306513).</text>
</comment>
<comment type="domain">
    <text evidence="8">CAHS proteins contain 2 repeats of 19-mer peptides designated as CAHS-motifs that comprise each two octapeptides connected by a tripeptide (PubMed:22937162).</text>
</comment>
<comment type="disruption phenotype">
    <text evidence="3">Results in a significant decrease in survival after desiccation but does not affect survival under frozen conditions (PubMed:28306513).</text>
</comment>
<comment type="miscellaneous">
    <text evidence="3">Trehalose, a disaccharide essential for several organisms to survive drying, is detected at low levels or not at all in some tardigrade species, indicating that tardigrades possess potentially novel mechanisms for surviving desiccation involving tardigrade-specific intrinsically disordered proteins (TDPs) (PubMed:28306513).</text>
</comment>
<comment type="similarity">
    <text evidence="7">Belongs to the Cytosolic-abundant heat soluble protein (CAHS) family.</text>
</comment>
<comment type="caution">
    <text evidence="3 4">It was suggested that CAHS proteins were intrinsically unstructured and show heat-dependent glass transition, which contributes to the vitrification of cells, and this further leads to desiccation tolerance (PubMed:28306513). However, more recent studies led to the conclusion that there was no evidence supporting glass transition of CAHS proteins to be contributing to the glass transition of the whole tardigrade (PubMed:33545053).</text>
</comment>
<protein>
    <recommendedName>
        <fullName evidence="6">Cytosolic-abundant heat soluble protein 94205</fullName>
        <shortName evidence="6">CAHS 94205</shortName>
    </recommendedName>
    <alternativeName>
        <fullName evidence="5">Cytosolic-abundant heat soluble protein a</fullName>
        <shortName evidence="5">SAHS-a</shortName>
    </alternativeName>
    <alternativeName>
        <fullName evidence="6">Tardigrade-specific intrinsically disordered protein CAHS 94205</fullName>
        <shortName evidence="6">TDP CAHS 94205</shortName>
    </alternativeName>
</protein>
<reference key="1">
    <citation type="journal article" date="2012" name="PLoS ONE">
        <title>Two novel heat-soluble protein families abundantly expressed in an anhydrobiotic tardigrade.</title>
        <authorList>
            <person name="Yamaguchi A."/>
            <person name="Tanaka S."/>
            <person name="Yamaguchi S."/>
            <person name="Kuwahara H."/>
            <person name="Takamura C."/>
            <person name="Imajoh-Ohmi S."/>
            <person name="Horikawa D.D."/>
            <person name="Toyoda A."/>
            <person name="Katayama T."/>
            <person name="Arakawa K."/>
            <person name="Fujiyama A."/>
            <person name="Kubo T."/>
            <person name="Kunieda T."/>
        </authorList>
    </citation>
    <scope>DOMAIN</scope>
</reference>
<reference key="2">
    <citation type="journal article" date="2017" name="Mol. Cell">
        <title>Tardigrades use intrinsically disordered proteins to survive desiccation.</title>
        <authorList>
            <person name="Boothby T.C."/>
            <person name="Tapia H."/>
            <person name="Brozena A.H."/>
            <person name="Piszkiewicz S."/>
            <person name="Smith A.E."/>
            <person name="Giovannini I."/>
            <person name="Rebecchi L."/>
            <person name="Pielak G.J."/>
            <person name="Koshland D."/>
            <person name="Goldstein B."/>
        </authorList>
    </citation>
    <scope>FUNCTION</scope>
    <scope>INDUCTION</scope>
    <scope>DISRUPTION PHENOTYPE</scope>
</reference>
<reference key="3">
    <citation type="journal article" date="2021" name="Mol. Cell">
        <title>Reconsidering the 'glass transition' hypothesis of intrinsically unstructured CAHS proteins in desiccation tolerance of tardigrades.</title>
        <authorList>
            <person name="Arakawa K."/>
            <person name="Numata K."/>
        </authorList>
    </citation>
    <scope>FUNCTION</scope>
</reference>
<feature type="chain" id="PRO_0000440190" description="Cytosolic-abundant heat soluble protein 94205">
    <location>
        <begin position="1"/>
        <end position="227"/>
    </location>
</feature>
<feature type="region of interest" description="Disordered" evidence="2">
    <location>
        <begin position="1"/>
        <end position="35"/>
    </location>
</feature>
<feature type="region of interest" description="Disordered" evidence="2">
    <location>
        <begin position="86"/>
        <end position="126"/>
    </location>
</feature>
<feature type="region of interest" description="CAHS motif 1" evidence="8">
    <location>
        <begin position="126"/>
        <end position="144"/>
    </location>
</feature>
<feature type="region of interest" description="CAHS motif 2" evidence="8">
    <location>
        <begin position="163"/>
        <end position="181"/>
    </location>
</feature>
<feature type="region of interest" description="Disordered" evidence="2">
    <location>
        <begin position="206"/>
        <end position="227"/>
    </location>
</feature>
<feature type="coiled-coil region" evidence="1">
    <location>
        <begin position="91"/>
        <end position="191"/>
    </location>
</feature>
<feature type="compositionally biased region" description="Basic and acidic residues" evidence="2">
    <location>
        <begin position="1"/>
        <end position="15"/>
    </location>
</feature>
<feature type="compositionally biased region" description="Basic and acidic residues" evidence="2">
    <location>
        <begin position="24"/>
        <end position="35"/>
    </location>
</feature>
<feature type="compositionally biased region" description="Basic and acidic residues" evidence="2">
    <location>
        <begin position="95"/>
        <end position="126"/>
    </location>
</feature>
<organism evidence="6">
    <name type="scientific">Hypsibius exemplaris</name>
    <name type="common">Freshwater tardigrade</name>
    <dbReference type="NCBI Taxonomy" id="2072580"/>
    <lineage>
        <taxon>Eukaryota</taxon>
        <taxon>Metazoa</taxon>
        <taxon>Ecdysozoa</taxon>
        <taxon>Tardigrada</taxon>
        <taxon>Eutardigrada</taxon>
        <taxon>Parachela</taxon>
        <taxon>Hypsibioidea</taxon>
        <taxon>Hypsibiidae</taxon>
        <taxon>Hypsibius</taxon>
    </lineage>
</organism>
<gene>
    <name evidence="6" type="primary">CAHS 94205</name>
    <name evidence="5" type="synonym">CAHS-a</name>
</gene>
<accession>P0CU45</accession>
<sequence length="227" mass="25485">MSGRNVESHMERNEKVVVNNSGHADVKKQQQQVEHTEFTHTEVKAPLIHPAPPIISTGAAGLAEEIVGQGFTASAARISGGTAEVHLQPSAAMTEEARRDQERYRQEQESIAKQQEREMEKKTEAYRKTAEAEAEKIRKELEKQHARDVEFRKDLIESTIDRQKREVDLEAKMAKRELDREGQLAKEALERSRLATNVEVNFDSAAGHTVSGGTTISSSDKMEIKRN</sequence>
<name>CAHS1_HYPEX</name>
<proteinExistence type="evidence at transcript level"/>
<dbReference type="SMR" id="P0CU45"/>
<dbReference type="GO" id="GO:0005737">
    <property type="term" value="C:cytoplasm"/>
    <property type="evidence" value="ECO:0007669"/>
    <property type="project" value="UniProtKB-SubCell"/>
</dbReference>
<dbReference type="GO" id="GO:0009269">
    <property type="term" value="P:response to desiccation"/>
    <property type="evidence" value="ECO:0000315"/>
    <property type="project" value="DisProt"/>
</dbReference>
<dbReference type="DisProt" id="DP01380"/>
<keyword id="KW-0175">Coiled coil</keyword>
<keyword id="KW-0963">Cytoplasm</keyword>
<keyword id="KW-0677">Repeat</keyword>
<keyword id="KW-0346">Stress response</keyword>